<comment type="function">
    <text evidence="1">Plays an important role in the de novo pathway of purine nucleotide biosynthesis. Catalyzes the first committed step in the biosynthesis of AMP from IMP.</text>
</comment>
<comment type="catalytic activity">
    <reaction evidence="1">
        <text>IMP + L-aspartate + GTP = N(6)-(1,2-dicarboxyethyl)-AMP + GDP + phosphate + 2 H(+)</text>
        <dbReference type="Rhea" id="RHEA:15753"/>
        <dbReference type="ChEBI" id="CHEBI:15378"/>
        <dbReference type="ChEBI" id="CHEBI:29991"/>
        <dbReference type="ChEBI" id="CHEBI:37565"/>
        <dbReference type="ChEBI" id="CHEBI:43474"/>
        <dbReference type="ChEBI" id="CHEBI:57567"/>
        <dbReference type="ChEBI" id="CHEBI:58053"/>
        <dbReference type="ChEBI" id="CHEBI:58189"/>
        <dbReference type="EC" id="6.3.4.4"/>
    </reaction>
</comment>
<comment type="cofactor">
    <cofactor evidence="1">
        <name>Mg(2+)</name>
        <dbReference type="ChEBI" id="CHEBI:18420"/>
    </cofactor>
    <text evidence="1">Binds 1 Mg(2+) ion per subunit.</text>
</comment>
<comment type="pathway">
    <text evidence="1">Purine metabolism; AMP biosynthesis via de novo pathway; AMP from IMP: step 1/2.</text>
</comment>
<comment type="subunit">
    <text evidence="1">Homodimer.</text>
</comment>
<comment type="subcellular location">
    <subcellularLocation>
        <location evidence="1">Cytoplasm</location>
    </subcellularLocation>
</comment>
<comment type="similarity">
    <text evidence="1">Belongs to the adenylosuccinate synthetase family.</text>
</comment>
<sequence length="411" mass="45626">MADVVVGIQWGDEGKGKIVDRIAKDYDFVVRYQGGHNAGHTIVHKGVKHSLHLMPSGVLYPKCKNIISSAVVVSVKDLCEEISAFEDLENRLFVSDRAHVILPYHAKKDAFKEQSQNIGTTKKGIGPCYEDKMARSGIRMGDLLDDKILEEKLNAHFKAIEPFKEAYGLGENYEKDLRGYFKAYAPKIRPFIKDTTSMLIEANQKGEKILLEGAQGTLLDIDLGTYPFVTSSNTTSASACVSTGLNPKAINEVIGITKAYCTRVGNGPFPSEDTTPMGDHLRTKGAEFGTTTKRPRRCGWLDLVALKYACALNGCTQLALMKLDVLDGIDAIKVCVAYERKGERLEAFPSDLKDCMPIYQTFKGWEKSVGVRKLEDLEPNAREYIRFIEKEVGVKIGLISTSPEREDTIFL</sequence>
<reference key="1">
    <citation type="submission" date="2008-10" db="EMBL/GenBank/DDBJ databases">
        <title>The complete genome sequence of Helicobacter pylori strain P12.</title>
        <authorList>
            <person name="Fischer W."/>
            <person name="Windhager L."/>
            <person name="Karnholz A."/>
            <person name="Zeiller M."/>
            <person name="Zimmer R."/>
            <person name="Haas R."/>
        </authorList>
    </citation>
    <scope>NUCLEOTIDE SEQUENCE [LARGE SCALE GENOMIC DNA]</scope>
    <source>
        <strain>P12</strain>
    </source>
</reference>
<keyword id="KW-0963">Cytoplasm</keyword>
<keyword id="KW-0342">GTP-binding</keyword>
<keyword id="KW-0436">Ligase</keyword>
<keyword id="KW-0460">Magnesium</keyword>
<keyword id="KW-0479">Metal-binding</keyword>
<keyword id="KW-0547">Nucleotide-binding</keyword>
<keyword id="KW-0658">Purine biosynthesis</keyword>
<accession>B6JKI4</accession>
<protein>
    <recommendedName>
        <fullName evidence="1">Adenylosuccinate synthetase</fullName>
        <shortName evidence="1">AMPSase</shortName>
        <shortName evidence="1">AdSS</shortName>
        <ecNumber evidence="1">6.3.4.4</ecNumber>
    </recommendedName>
    <alternativeName>
        <fullName evidence="1">IMP--aspartate ligase</fullName>
    </alternativeName>
</protein>
<name>PURA_HELP2</name>
<gene>
    <name evidence="1" type="primary">purA</name>
    <name type="ordered locus">HPP12_0254</name>
</gene>
<organism>
    <name type="scientific">Helicobacter pylori (strain P12)</name>
    <dbReference type="NCBI Taxonomy" id="570508"/>
    <lineage>
        <taxon>Bacteria</taxon>
        <taxon>Pseudomonadati</taxon>
        <taxon>Campylobacterota</taxon>
        <taxon>Epsilonproteobacteria</taxon>
        <taxon>Campylobacterales</taxon>
        <taxon>Helicobacteraceae</taxon>
        <taxon>Helicobacter</taxon>
    </lineage>
</organism>
<dbReference type="EC" id="6.3.4.4" evidence="1"/>
<dbReference type="EMBL" id="CP001217">
    <property type="protein sequence ID" value="ACJ07412.1"/>
    <property type="molecule type" value="Genomic_DNA"/>
</dbReference>
<dbReference type="SMR" id="B6JKI4"/>
<dbReference type="KEGG" id="hpp:HPP12_0254"/>
<dbReference type="HOGENOM" id="CLU_029848_0_0_7"/>
<dbReference type="UniPathway" id="UPA00075">
    <property type="reaction ID" value="UER00335"/>
</dbReference>
<dbReference type="Proteomes" id="UP000008198">
    <property type="component" value="Chromosome"/>
</dbReference>
<dbReference type="GO" id="GO:0005737">
    <property type="term" value="C:cytoplasm"/>
    <property type="evidence" value="ECO:0007669"/>
    <property type="project" value="UniProtKB-SubCell"/>
</dbReference>
<dbReference type="GO" id="GO:0004019">
    <property type="term" value="F:adenylosuccinate synthase activity"/>
    <property type="evidence" value="ECO:0007669"/>
    <property type="project" value="UniProtKB-UniRule"/>
</dbReference>
<dbReference type="GO" id="GO:0005525">
    <property type="term" value="F:GTP binding"/>
    <property type="evidence" value="ECO:0007669"/>
    <property type="project" value="UniProtKB-UniRule"/>
</dbReference>
<dbReference type="GO" id="GO:0000287">
    <property type="term" value="F:magnesium ion binding"/>
    <property type="evidence" value="ECO:0007669"/>
    <property type="project" value="UniProtKB-UniRule"/>
</dbReference>
<dbReference type="GO" id="GO:0044208">
    <property type="term" value="P:'de novo' AMP biosynthetic process"/>
    <property type="evidence" value="ECO:0007669"/>
    <property type="project" value="UniProtKB-UniRule"/>
</dbReference>
<dbReference type="GO" id="GO:0046040">
    <property type="term" value="P:IMP metabolic process"/>
    <property type="evidence" value="ECO:0007669"/>
    <property type="project" value="TreeGrafter"/>
</dbReference>
<dbReference type="CDD" id="cd03108">
    <property type="entry name" value="AdSS"/>
    <property type="match status" value="1"/>
</dbReference>
<dbReference type="FunFam" id="1.10.300.10:FF:000001">
    <property type="entry name" value="Adenylosuccinate synthetase"/>
    <property type="match status" value="1"/>
</dbReference>
<dbReference type="FunFam" id="3.90.170.10:FF:000004">
    <property type="entry name" value="Adenylosuccinate synthetase"/>
    <property type="match status" value="1"/>
</dbReference>
<dbReference type="Gene3D" id="3.40.440.10">
    <property type="entry name" value="Adenylosuccinate Synthetase, subunit A, domain 1"/>
    <property type="match status" value="1"/>
</dbReference>
<dbReference type="Gene3D" id="1.10.300.10">
    <property type="entry name" value="Adenylosuccinate Synthetase, subunit A, domain 2"/>
    <property type="match status" value="1"/>
</dbReference>
<dbReference type="Gene3D" id="3.90.170.10">
    <property type="entry name" value="Adenylosuccinate Synthetase, subunit A, domain 3"/>
    <property type="match status" value="1"/>
</dbReference>
<dbReference type="HAMAP" id="MF_00011">
    <property type="entry name" value="Adenylosucc_synth"/>
    <property type="match status" value="1"/>
</dbReference>
<dbReference type="InterPro" id="IPR018220">
    <property type="entry name" value="Adenylosuccin_syn_GTP-bd"/>
</dbReference>
<dbReference type="InterPro" id="IPR033128">
    <property type="entry name" value="Adenylosuccin_syn_Lys_AS"/>
</dbReference>
<dbReference type="InterPro" id="IPR042109">
    <property type="entry name" value="Adenylosuccinate_synth_dom1"/>
</dbReference>
<dbReference type="InterPro" id="IPR042110">
    <property type="entry name" value="Adenylosuccinate_synth_dom2"/>
</dbReference>
<dbReference type="InterPro" id="IPR042111">
    <property type="entry name" value="Adenylosuccinate_synth_dom3"/>
</dbReference>
<dbReference type="InterPro" id="IPR001114">
    <property type="entry name" value="Adenylosuccinate_synthetase"/>
</dbReference>
<dbReference type="InterPro" id="IPR027417">
    <property type="entry name" value="P-loop_NTPase"/>
</dbReference>
<dbReference type="NCBIfam" id="NF002223">
    <property type="entry name" value="PRK01117.1"/>
    <property type="match status" value="1"/>
</dbReference>
<dbReference type="NCBIfam" id="TIGR00184">
    <property type="entry name" value="purA"/>
    <property type="match status" value="1"/>
</dbReference>
<dbReference type="PANTHER" id="PTHR11846">
    <property type="entry name" value="ADENYLOSUCCINATE SYNTHETASE"/>
    <property type="match status" value="1"/>
</dbReference>
<dbReference type="PANTHER" id="PTHR11846:SF0">
    <property type="entry name" value="ADENYLOSUCCINATE SYNTHETASE"/>
    <property type="match status" value="1"/>
</dbReference>
<dbReference type="Pfam" id="PF00709">
    <property type="entry name" value="Adenylsucc_synt"/>
    <property type="match status" value="1"/>
</dbReference>
<dbReference type="SMART" id="SM00788">
    <property type="entry name" value="Adenylsucc_synt"/>
    <property type="match status" value="1"/>
</dbReference>
<dbReference type="SUPFAM" id="SSF52540">
    <property type="entry name" value="P-loop containing nucleoside triphosphate hydrolases"/>
    <property type="match status" value="1"/>
</dbReference>
<dbReference type="PROSITE" id="PS01266">
    <property type="entry name" value="ADENYLOSUCCIN_SYN_1"/>
    <property type="match status" value="1"/>
</dbReference>
<dbReference type="PROSITE" id="PS00513">
    <property type="entry name" value="ADENYLOSUCCIN_SYN_2"/>
    <property type="match status" value="1"/>
</dbReference>
<evidence type="ECO:0000255" key="1">
    <source>
        <dbReference type="HAMAP-Rule" id="MF_00011"/>
    </source>
</evidence>
<feature type="chain" id="PRO_1000089301" description="Adenylosuccinate synthetase">
    <location>
        <begin position="1"/>
        <end position="411"/>
    </location>
</feature>
<feature type="active site" description="Proton acceptor" evidence="1">
    <location>
        <position position="12"/>
    </location>
</feature>
<feature type="active site" description="Proton donor" evidence="1">
    <location>
        <position position="40"/>
    </location>
</feature>
<feature type="binding site" evidence="1">
    <location>
        <begin position="11"/>
        <end position="17"/>
    </location>
    <ligand>
        <name>GTP</name>
        <dbReference type="ChEBI" id="CHEBI:37565"/>
    </ligand>
</feature>
<feature type="binding site" description="in other chain" evidence="1">
    <location>
        <begin position="12"/>
        <end position="15"/>
    </location>
    <ligand>
        <name>IMP</name>
        <dbReference type="ChEBI" id="CHEBI:58053"/>
        <note>ligand shared between dimeric partners</note>
    </ligand>
</feature>
<feature type="binding site" evidence="1">
    <location>
        <position position="12"/>
    </location>
    <ligand>
        <name>Mg(2+)</name>
        <dbReference type="ChEBI" id="CHEBI:18420"/>
    </ligand>
</feature>
<feature type="binding site" description="in other chain" evidence="1">
    <location>
        <begin position="37"/>
        <end position="40"/>
    </location>
    <ligand>
        <name>IMP</name>
        <dbReference type="ChEBI" id="CHEBI:58053"/>
        <note>ligand shared between dimeric partners</note>
    </ligand>
</feature>
<feature type="binding site" evidence="1">
    <location>
        <begin position="39"/>
        <end position="41"/>
    </location>
    <ligand>
        <name>GTP</name>
        <dbReference type="ChEBI" id="CHEBI:37565"/>
    </ligand>
</feature>
<feature type="binding site" evidence="1">
    <location>
        <position position="39"/>
    </location>
    <ligand>
        <name>Mg(2+)</name>
        <dbReference type="ChEBI" id="CHEBI:18420"/>
    </ligand>
</feature>
<feature type="binding site" description="in other chain" evidence="1">
    <location>
        <position position="121"/>
    </location>
    <ligand>
        <name>IMP</name>
        <dbReference type="ChEBI" id="CHEBI:58053"/>
        <note>ligand shared between dimeric partners</note>
    </ligand>
</feature>
<feature type="binding site" evidence="1">
    <location>
        <position position="135"/>
    </location>
    <ligand>
        <name>IMP</name>
        <dbReference type="ChEBI" id="CHEBI:58053"/>
        <note>ligand shared between dimeric partners</note>
    </ligand>
</feature>
<feature type="binding site" description="in other chain" evidence="1">
    <location>
        <position position="215"/>
    </location>
    <ligand>
        <name>IMP</name>
        <dbReference type="ChEBI" id="CHEBI:58053"/>
        <note>ligand shared between dimeric partners</note>
    </ligand>
</feature>
<feature type="binding site" description="in other chain" evidence="1">
    <location>
        <position position="230"/>
    </location>
    <ligand>
        <name>IMP</name>
        <dbReference type="ChEBI" id="CHEBI:58053"/>
        <note>ligand shared between dimeric partners</note>
    </ligand>
</feature>
<feature type="binding site" evidence="1">
    <location>
        <begin position="290"/>
        <end position="296"/>
    </location>
    <ligand>
        <name>substrate</name>
    </ligand>
</feature>
<feature type="binding site" description="in other chain" evidence="1">
    <location>
        <position position="294"/>
    </location>
    <ligand>
        <name>IMP</name>
        <dbReference type="ChEBI" id="CHEBI:58053"/>
        <note>ligand shared between dimeric partners</note>
    </ligand>
</feature>
<feature type="binding site" evidence="1">
    <location>
        <position position="296"/>
    </location>
    <ligand>
        <name>GTP</name>
        <dbReference type="ChEBI" id="CHEBI:37565"/>
    </ligand>
</feature>
<feature type="binding site" evidence="1">
    <location>
        <begin position="322"/>
        <end position="324"/>
    </location>
    <ligand>
        <name>GTP</name>
        <dbReference type="ChEBI" id="CHEBI:37565"/>
    </ligand>
</feature>
<feature type="binding site" evidence="1">
    <location>
        <begin position="400"/>
        <end position="402"/>
    </location>
    <ligand>
        <name>GTP</name>
        <dbReference type="ChEBI" id="CHEBI:37565"/>
    </ligand>
</feature>
<proteinExistence type="inferred from homology"/>